<dbReference type="EMBL" id="AE000516">
    <property type="protein sequence ID" value="AAK47231.1"/>
    <property type="molecule type" value="Genomic_DNA"/>
</dbReference>
<dbReference type="PIR" id="B70694">
    <property type="entry name" value="B70694"/>
</dbReference>
<dbReference type="RefSeq" id="WP_003899505.1">
    <property type="nucleotide sequence ID" value="NZ_KK341227.1"/>
</dbReference>
<dbReference type="SMR" id="P9WKK0"/>
<dbReference type="GeneID" id="45426826"/>
<dbReference type="KEGG" id="mtc:MT2905"/>
<dbReference type="PATRIC" id="fig|83331.31.peg.3138"/>
<dbReference type="HOGENOM" id="CLU_006301_9_2_11"/>
<dbReference type="Proteomes" id="UP000001020">
    <property type="component" value="Chromosome"/>
</dbReference>
<dbReference type="GO" id="GO:0005829">
    <property type="term" value="C:cytosol"/>
    <property type="evidence" value="ECO:0007669"/>
    <property type="project" value="TreeGrafter"/>
</dbReference>
<dbReference type="GO" id="GO:0005525">
    <property type="term" value="F:GTP binding"/>
    <property type="evidence" value="ECO:0007669"/>
    <property type="project" value="UniProtKB-KW"/>
</dbReference>
<dbReference type="GO" id="GO:0003924">
    <property type="term" value="F:GTPase activity"/>
    <property type="evidence" value="ECO:0007669"/>
    <property type="project" value="UniProtKB-UniRule"/>
</dbReference>
<dbReference type="GO" id="GO:0003743">
    <property type="term" value="F:translation initiation factor activity"/>
    <property type="evidence" value="ECO:0007669"/>
    <property type="project" value="UniProtKB-UniRule"/>
</dbReference>
<dbReference type="CDD" id="cd01887">
    <property type="entry name" value="IF2_eIF5B"/>
    <property type="match status" value="1"/>
</dbReference>
<dbReference type="CDD" id="cd03702">
    <property type="entry name" value="IF2_mtIF2_II"/>
    <property type="match status" value="1"/>
</dbReference>
<dbReference type="CDD" id="cd03692">
    <property type="entry name" value="mtIF2_IVc"/>
    <property type="match status" value="1"/>
</dbReference>
<dbReference type="FunFam" id="1.10.10.2480:FF:000003">
    <property type="entry name" value="Translation initiation factor IF-2"/>
    <property type="match status" value="1"/>
</dbReference>
<dbReference type="FunFam" id="2.40.30.10:FF:000007">
    <property type="entry name" value="Translation initiation factor IF-2"/>
    <property type="match status" value="1"/>
</dbReference>
<dbReference type="FunFam" id="2.40.30.10:FF:000008">
    <property type="entry name" value="Translation initiation factor IF-2"/>
    <property type="match status" value="1"/>
</dbReference>
<dbReference type="FunFam" id="3.40.50.10050:FF:000001">
    <property type="entry name" value="Translation initiation factor IF-2"/>
    <property type="match status" value="1"/>
</dbReference>
<dbReference type="FunFam" id="3.40.50.300:FF:000019">
    <property type="entry name" value="Translation initiation factor IF-2"/>
    <property type="match status" value="1"/>
</dbReference>
<dbReference type="Gene3D" id="1.10.10.2480">
    <property type="match status" value="1"/>
</dbReference>
<dbReference type="Gene3D" id="3.40.50.300">
    <property type="entry name" value="P-loop containing nucleotide triphosphate hydrolases"/>
    <property type="match status" value="1"/>
</dbReference>
<dbReference type="Gene3D" id="2.40.30.10">
    <property type="entry name" value="Translation factors"/>
    <property type="match status" value="2"/>
</dbReference>
<dbReference type="Gene3D" id="3.40.50.10050">
    <property type="entry name" value="Translation initiation factor IF- 2, domain 3"/>
    <property type="match status" value="1"/>
</dbReference>
<dbReference type="HAMAP" id="MF_00100_B">
    <property type="entry name" value="IF_2_B"/>
    <property type="match status" value="1"/>
</dbReference>
<dbReference type="InterPro" id="IPR053905">
    <property type="entry name" value="EF-G-like_DII"/>
</dbReference>
<dbReference type="InterPro" id="IPR044145">
    <property type="entry name" value="IF2_II"/>
</dbReference>
<dbReference type="InterPro" id="IPR006847">
    <property type="entry name" value="IF2_N"/>
</dbReference>
<dbReference type="InterPro" id="IPR027417">
    <property type="entry name" value="P-loop_NTPase"/>
</dbReference>
<dbReference type="InterPro" id="IPR005225">
    <property type="entry name" value="Small_GTP-bd"/>
</dbReference>
<dbReference type="InterPro" id="IPR000795">
    <property type="entry name" value="T_Tr_GTP-bd_dom"/>
</dbReference>
<dbReference type="InterPro" id="IPR000178">
    <property type="entry name" value="TF_IF2_bacterial-like"/>
</dbReference>
<dbReference type="InterPro" id="IPR015760">
    <property type="entry name" value="TIF_IF2"/>
</dbReference>
<dbReference type="InterPro" id="IPR023115">
    <property type="entry name" value="TIF_IF2_dom3"/>
</dbReference>
<dbReference type="InterPro" id="IPR036925">
    <property type="entry name" value="TIF_IF2_dom3_sf"/>
</dbReference>
<dbReference type="InterPro" id="IPR009000">
    <property type="entry name" value="Transl_B-barrel_sf"/>
</dbReference>
<dbReference type="NCBIfam" id="TIGR00487">
    <property type="entry name" value="IF-2"/>
    <property type="match status" value="1"/>
</dbReference>
<dbReference type="NCBIfam" id="TIGR00231">
    <property type="entry name" value="small_GTP"/>
    <property type="match status" value="1"/>
</dbReference>
<dbReference type="PANTHER" id="PTHR43381:SF5">
    <property type="entry name" value="TR-TYPE G DOMAIN-CONTAINING PROTEIN"/>
    <property type="match status" value="1"/>
</dbReference>
<dbReference type="PANTHER" id="PTHR43381">
    <property type="entry name" value="TRANSLATION INITIATION FACTOR IF-2-RELATED"/>
    <property type="match status" value="1"/>
</dbReference>
<dbReference type="Pfam" id="PF22042">
    <property type="entry name" value="EF-G_D2"/>
    <property type="match status" value="1"/>
</dbReference>
<dbReference type="Pfam" id="PF00009">
    <property type="entry name" value="GTP_EFTU"/>
    <property type="match status" value="1"/>
</dbReference>
<dbReference type="Pfam" id="PF11987">
    <property type="entry name" value="IF-2"/>
    <property type="match status" value="1"/>
</dbReference>
<dbReference type="Pfam" id="PF04760">
    <property type="entry name" value="IF2_N"/>
    <property type="match status" value="2"/>
</dbReference>
<dbReference type="PRINTS" id="PR00315">
    <property type="entry name" value="ELONGATNFCT"/>
</dbReference>
<dbReference type="SUPFAM" id="SSF52156">
    <property type="entry name" value="Initiation factor IF2/eIF5b, domain 3"/>
    <property type="match status" value="1"/>
</dbReference>
<dbReference type="SUPFAM" id="SSF52540">
    <property type="entry name" value="P-loop containing nucleoside triphosphate hydrolases"/>
    <property type="match status" value="1"/>
</dbReference>
<dbReference type="SUPFAM" id="SSF50447">
    <property type="entry name" value="Translation proteins"/>
    <property type="match status" value="2"/>
</dbReference>
<dbReference type="PROSITE" id="PS51722">
    <property type="entry name" value="G_TR_2"/>
    <property type="match status" value="1"/>
</dbReference>
<dbReference type="PROSITE" id="PS01176">
    <property type="entry name" value="IF2"/>
    <property type="match status" value="1"/>
</dbReference>
<protein>
    <recommendedName>
        <fullName>Translation initiation factor IF-2</fullName>
    </recommendedName>
</protein>
<sequence>MAAGKARVHELAKELGVTSKEVLARLSEQGEFVKSASSTVEAPVARRLRESFGGSKPAPAKGTAKSPGKGPDKSLDKALDAAIDMAAGNGKATAAPAKAADSGGAAIVSPTTPAAPEPPTAVPPSPQAPHPGMAPGARPGPVPKPGIRTPRVGNNPFSSAQPADRPIPRPPAPRPGTARPGVPRPGASPGSMPPRPGGAVGGARPPRPGAPRPGGRPGAPGAGRSDAGGGNYRGGGVGAAPGTGFRGRPGGGGGGRPGQRGGAAGAFGRPGGAPRRGRKSKRQKRQEYDSMQAPVVGGVRLPHGNGETIRLARGASLSDFADKIDANPAALVQALFNLGEMVTATQSVGDETLELLGSEMNYNVQVVSPEDEDRELLESFDLSYGEDEGGEEDLQVRPPVVTVMGHVDHGKTRLLDTIRKANVREAEAGGITQHIGAYQVAVDLDGSQRLITFIDTPGHEAFTAMRARGAKATDIAILVVAADDGVMPQTVEAINHAQAADVPIVVAVNKIDKEGADPAKIRGQLTEYGLVPEEFGGDTMFVDISAKQGTNIEALEEAVLLTADAALDLRANPDMEAQGVAIEAHLDRGRGPVATVLVQRGTLRVGDSVVAGDAYGRVRRMVDEHGEDVEVALPSRPVQVIGFTSVPGAGDNFLVVDEDRIARQIADRRSARKRNALAARSRKRISLEDLDSALKETSQLNLILKGDNAGTVEALEEALMGIQVDDEVVLRVIDRGVGGITETNVNLASASDAVIIGFNVRAEGKATELASREGVEIRYYSVIYQAIDEIEQALRGLLKPIYEENQLGRAEIRALFRSSKVGLIAGCLVTSGVMRRNAKARLLRDNIVVAENLSIASLRREKDDVTEVRDGFECGLTLGYADIKEGDVIESYELVQKERA</sequence>
<gene>
    <name type="primary">infB</name>
    <name type="ordered locus">MT2905</name>
</gene>
<organism>
    <name type="scientific">Mycobacterium tuberculosis (strain CDC 1551 / Oshkosh)</name>
    <dbReference type="NCBI Taxonomy" id="83331"/>
    <lineage>
        <taxon>Bacteria</taxon>
        <taxon>Bacillati</taxon>
        <taxon>Actinomycetota</taxon>
        <taxon>Actinomycetes</taxon>
        <taxon>Mycobacteriales</taxon>
        <taxon>Mycobacteriaceae</taxon>
        <taxon>Mycobacterium</taxon>
        <taxon>Mycobacterium tuberculosis complex</taxon>
    </lineage>
</organism>
<name>IF2_MYCTO</name>
<proteinExistence type="inferred from homology"/>
<comment type="function">
    <text evidence="1">One of the essential components for the initiation of protein synthesis. Protects formylmethionyl-tRNA from spontaneous hydrolysis and promotes its binding to the 30S ribosomal subunits. Also involved in the hydrolysis of GTP during the formation of the 70S ribosomal complex (By similarity).</text>
</comment>
<comment type="subcellular location">
    <subcellularLocation>
        <location evidence="1">Cytoplasm</location>
    </subcellularLocation>
</comment>
<comment type="similarity">
    <text evidence="3">Belongs to the TRAFAC class translation factor GTPase superfamily. Classic translation factor GTPase family. IF-2 subfamily.</text>
</comment>
<accession>P9WKK0</accession>
<accession>L0TAT1</accession>
<accession>P65131</accession>
<accession>P71613</accession>
<feature type="chain" id="PRO_0000427640" description="Translation initiation factor IF-2">
    <location>
        <begin position="1"/>
        <end position="900"/>
    </location>
</feature>
<feature type="domain" description="tr-type G">
    <location>
        <begin position="396"/>
        <end position="567"/>
    </location>
</feature>
<feature type="region of interest" description="Disordered" evidence="2">
    <location>
        <begin position="30"/>
        <end position="77"/>
    </location>
</feature>
<feature type="region of interest" description="Disordered" evidence="2">
    <location>
        <begin position="89"/>
        <end position="291"/>
    </location>
</feature>
<feature type="region of interest" description="G1" evidence="1">
    <location>
        <begin position="405"/>
        <end position="412"/>
    </location>
</feature>
<feature type="region of interest" description="G2" evidence="1">
    <location>
        <begin position="430"/>
        <end position="434"/>
    </location>
</feature>
<feature type="region of interest" description="G3" evidence="1">
    <location>
        <begin position="455"/>
        <end position="458"/>
    </location>
</feature>
<feature type="region of interest" description="G4" evidence="1">
    <location>
        <begin position="509"/>
        <end position="512"/>
    </location>
</feature>
<feature type="region of interest" description="G5" evidence="1">
    <location>
        <begin position="545"/>
        <end position="547"/>
    </location>
</feature>
<feature type="compositionally biased region" description="Low complexity" evidence="2">
    <location>
        <begin position="89"/>
        <end position="112"/>
    </location>
</feature>
<feature type="compositionally biased region" description="Pro residues" evidence="2">
    <location>
        <begin position="113"/>
        <end position="129"/>
    </location>
</feature>
<feature type="compositionally biased region" description="Low complexity" evidence="2">
    <location>
        <begin position="175"/>
        <end position="187"/>
    </location>
</feature>
<feature type="compositionally biased region" description="Gly residues" evidence="2">
    <location>
        <begin position="215"/>
        <end position="271"/>
    </location>
</feature>
<feature type="compositionally biased region" description="Basic residues" evidence="2">
    <location>
        <begin position="275"/>
        <end position="284"/>
    </location>
</feature>
<feature type="binding site" evidence="1">
    <location>
        <begin position="405"/>
        <end position="412"/>
    </location>
    <ligand>
        <name>GTP</name>
        <dbReference type="ChEBI" id="CHEBI:37565"/>
    </ligand>
</feature>
<feature type="binding site" evidence="1">
    <location>
        <begin position="455"/>
        <end position="459"/>
    </location>
    <ligand>
        <name>GTP</name>
        <dbReference type="ChEBI" id="CHEBI:37565"/>
    </ligand>
</feature>
<feature type="binding site" evidence="1">
    <location>
        <begin position="509"/>
        <end position="512"/>
    </location>
    <ligand>
        <name>GTP</name>
        <dbReference type="ChEBI" id="CHEBI:37565"/>
    </ligand>
</feature>
<keyword id="KW-0963">Cytoplasm</keyword>
<keyword id="KW-0342">GTP-binding</keyword>
<keyword id="KW-0396">Initiation factor</keyword>
<keyword id="KW-0547">Nucleotide-binding</keyword>
<keyword id="KW-0648">Protein biosynthesis</keyword>
<keyword id="KW-1185">Reference proteome</keyword>
<reference key="1">
    <citation type="journal article" date="2002" name="J. Bacteriol.">
        <title>Whole-genome comparison of Mycobacterium tuberculosis clinical and laboratory strains.</title>
        <authorList>
            <person name="Fleischmann R.D."/>
            <person name="Alland D."/>
            <person name="Eisen J.A."/>
            <person name="Carpenter L."/>
            <person name="White O."/>
            <person name="Peterson J.D."/>
            <person name="DeBoy R.T."/>
            <person name="Dodson R.J."/>
            <person name="Gwinn M.L."/>
            <person name="Haft D.H."/>
            <person name="Hickey E.K."/>
            <person name="Kolonay J.F."/>
            <person name="Nelson W.C."/>
            <person name="Umayam L.A."/>
            <person name="Ermolaeva M.D."/>
            <person name="Salzberg S.L."/>
            <person name="Delcher A."/>
            <person name="Utterback T.R."/>
            <person name="Weidman J.F."/>
            <person name="Khouri H.M."/>
            <person name="Gill J."/>
            <person name="Mikula A."/>
            <person name="Bishai W."/>
            <person name="Jacobs W.R. Jr."/>
            <person name="Venter J.C."/>
            <person name="Fraser C.M."/>
        </authorList>
    </citation>
    <scope>NUCLEOTIDE SEQUENCE [LARGE SCALE GENOMIC DNA]</scope>
    <source>
        <strain>CDC 1551 / Oshkosh</strain>
    </source>
</reference>
<evidence type="ECO:0000250" key="1"/>
<evidence type="ECO:0000256" key="2">
    <source>
        <dbReference type="SAM" id="MobiDB-lite"/>
    </source>
</evidence>
<evidence type="ECO:0000305" key="3"/>